<proteinExistence type="inferred from homology"/>
<comment type="function">
    <text evidence="4 5 9">CAHS proteins are cytosolic heat soluble proteins that seem to contribute to the anhydrobiosis in tardigrades, but their specific mechanisms are yet to be identified (PubMed:28306513, PubMed:33545053). It is possible that protection during anhydrobiosis might occur via the stabilization of vitrifying small molecules such as sugars, but not via the direct glass transition of CAHS proteins themselves (Probable).</text>
</comment>
<comment type="subcellular location">
    <subcellularLocation>
        <location evidence="8">Cytoplasm</location>
    </subcellularLocation>
</comment>
<comment type="domain">
    <text evidence="1">CAHS proteins contain 2 repeats of 19-mer peptides designated as CAHS-motifs that comprise each two octapeptides connected by a tripeptide (By similarity).</text>
</comment>
<comment type="miscellaneous">
    <text evidence="4">Trehalose, a disaccharide essential for several organisms to survive drying, is detected at low levels or not at all in some tardigrade species, indicating that tardigrades possess potentially novel mechanisms for surviving desiccation involving tardigrade-specific intrinsically disordered proteins (TDPs) (PubMed:28306513).</text>
</comment>
<comment type="similarity">
    <text evidence="7">Belongs to the Cytosolic-abundant heat soluble protein (CAHS) family.</text>
</comment>
<comment type="caution">
    <text evidence="4 5">It was suggested that CAHS proteins were intrinsically unstructured and show heat-dependent glass transition, which contributes to the vitrification of cells, and this further leads to desiccation tolerance (PubMed:28306513). However, more recent studies led to the conclusion that there was no evidence supporting glass transition of CAHS proteins to be contributing to the glass transition of the whole tardigrade (PubMed:33545053).</text>
</comment>
<dbReference type="SMR" id="P0CU52"/>
<dbReference type="GO" id="GO:0005737">
    <property type="term" value="C:cytoplasm"/>
    <property type="evidence" value="ECO:0007669"/>
    <property type="project" value="UniProtKB-SubCell"/>
</dbReference>
<dbReference type="GO" id="GO:0009269">
    <property type="term" value="P:response to desiccation"/>
    <property type="evidence" value="ECO:0000315"/>
    <property type="project" value="DisProt"/>
</dbReference>
<dbReference type="DisProt" id="DP01388"/>
<reference key="1">
    <citation type="journal article" date="2017" name="Mol. Cell">
        <title>Tardigrades use intrinsically disordered proteins to survive desiccation.</title>
        <authorList>
            <person name="Boothby T.C."/>
            <person name="Tapia H."/>
            <person name="Brozena A.H."/>
            <person name="Piszkiewicz S."/>
            <person name="Smith A.E."/>
            <person name="Giovannini I."/>
            <person name="Rebecchi L."/>
            <person name="Pielak G.J."/>
            <person name="Koshland D."/>
            <person name="Goldstein B."/>
        </authorList>
    </citation>
    <scope>FUNCTION</scope>
</reference>
<reference key="2">
    <citation type="journal article" date="2021" name="Mol. Cell">
        <title>Reconsidering the 'glass transition' hypothesis of intrinsically unstructured CAHS proteins in desiccation tolerance of tardigrades.</title>
        <authorList>
            <person name="Arakawa K."/>
            <person name="Numata K."/>
        </authorList>
    </citation>
    <scope>FUNCTION</scope>
</reference>
<sequence length="227" mass="26777">MEAMNMNIPRDAMFVPPPESEQNGYHEKSEVQQTSYMQSQVKVPHYNFPTPYFTTSFSAQELLGEGFQASISRISAVTEDMQSMEIPEFVEEARRDYAAKTRENEMLGQQYEKELERKSEAYRKHQEVEADKIRKELEKQHMRDIEFRKEIAELAIENQKRMIDLECRYAKKDMDRERTKVRMMLEQQKFHSDIQVNLDSSAAGTESGGHVVSQSEKFTERNREMKR</sequence>
<keyword id="KW-0175">Coiled coil</keyword>
<keyword id="KW-0963">Cytoplasm</keyword>
<keyword id="KW-0677">Repeat</keyword>
<keyword id="KW-0346">Stress response</keyword>
<evidence type="ECO:0000250" key="1">
    <source>
        <dbReference type="UniProtKB" id="J7M799"/>
    </source>
</evidence>
<evidence type="ECO:0000255" key="2"/>
<evidence type="ECO:0000256" key="3">
    <source>
        <dbReference type="SAM" id="MobiDB-lite"/>
    </source>
</evidence>
<evidence type="ECO:0000269" key="4">
    <source>
    </source>
</evidence>
<evidence type="ECO:0000269" key="5">
    <source>
    </source>
</evidence>
<evidence type="ECO:0000303" key="6">
    <source>
    </source>
</evidence>
<evidence type="ECO:0000305" key="7"/>
<evidence type="ECO:0000305" key="8">
    <source>
    </source>
</evidence>
<evidence type="ECO:0000305" key="9">
    <source>
    </source>
</evidence>
<gene>
    <name evidence="6" type="primary">CAHS 106094</name>
</gene>
<protein>
    <recommendedName>
        <fullName evidence="6">Cytosolic-abundant heat soluble protein 106094</fullName>
        <shortName evidence="6">CAHS 106094</shortName>
    </recommendedName>
    <alternativeName>
        <fullName evidence="6">Tardigrade-specific intrinsically disordered protein CAHS 106094</fullName>
        <shortName evidence="6">TDP CAHS 106094</shortName>
    </alternativeName>
</protein>
<name>CAHS2_PARRC</name>
<accession>P0CU52</accession>
<organism>
    <name type="scientific">Paramacrobiotus richtersi</name>
    <name type="common">Water bear</name>
    <name type="synonym">Macrobiotus richtersi</name>
    <dbReference type="NCBI Taxonomy" id="697321"/>
    <lineage>
        <taxon>Eukaryota</taxon>
        <taxon>Metazoa</taxon>
        <taxon>Ecdysozoa</taxon>
        <taxon>Tardigrada</taxon>
        <taxon>Eutardigrada</taxon>
        <taxon>Parachela</taxon>
        <taxon>Macrobiotoidea</taxon>
        <taxon>Macrobiotidae</taxon>
        <taxon>Paramacrobiotus</taxon>
        <taxon>Paramacrobiotus richtersi group</taxon>
    </lineage>
</organism>
<feature type="chain" id="PRO_0000440199" description="Cytosolic-abundant heat soluble protein 106094">
    <location>
        <begin position="1"/>
        <end position="227"/>
    </location>
</feature>
<feature type="region of interest" description="Disordered" evidence="3">
    <location>
        <begin position="1"/>
        <end position="28"/>
    </location>
</feature>
<feature type="region of interest" description="CAHS motif 1" evidence="1">
    <location>
        <begin position="122"/>
        <end position="140"/>
    </location>
</feature>
<feature type="region of interest" description="CAHS motif 2" evidence="1">
    <location>
        <begin position="159"/>
        <end position="177"/>
    </location>
</feature>
<feature type="region of interest" description="Disordered" evidence="3">
    <location>
        <begin position="198"/>
        <end position="227"/>
    </location>
</feature>
<feature type="coiled-coil region" evidence="2">
    <location>
        <begin position="90"/>
        <end position="140"/>
    </location>
</feature>
<feature type="compositionally biased region" description="Basic and acidic residues" evidence="3">
    <location>
        <begin position="217"/>
        <end position="227"/>
    </location>
</feature>